<protein>
    <recommendedName>
        <fullName>Leucine carboxyl methyltransferase 1</fullName>
        <ecNumber>2.1.1.233</ecNumber>
    </recommendedName>
    <alternativeName>
        <fullName>Protein phosphatase methyltransferase 1</fullName>
    </alternativeName>
    <alternativeName>
        <fullName>[Phosphatase 2A protein]-leucine-carboxy methyltransferase 1</fullName>
    </alternativeName>
</protein>
<organism>
    <name type="scientific">Yarrowia lipolytica (strain CLIB 122 / E 150)</name>
    <name type="common">Yeast</name>
    <name type="synonym">Candida lipolytica</name>
    <dbReference type="NCBI Taxonomy" id="284591"/>
    <lineage>
        <taxon>Eukaryota</taxon>
        <taxon>Fungi</taxon>
        <taxon>Dikarya</taxon>
        <taxon>Ascomycota</taxon>
        <taxon>Saccharomycotina</taxon>
        <taxon>Dipodascomycetes</taxon>
        <taxon>Dipodascales</taxon>
        <taxon>Dipodascales incertae sedis</taxon>
        <taxon>Yarrowia</taxon>
    </lineage>
</organism>
<keyword id="KW-0489">Methyltransferase</keyword>
<keyword id="KW-1185">Reference proteome</keyword>
<keyword id="KW-0949">S-adenosyl-L-methionine</keyword>
<keyword id="KW-0808">Transferase</keyword>
<feature type="chain" id="PRO_0000226134" description="Leucine carboxyl methyltransferase 1">
    <location>
        <begin position="1"/>
        <end position="324"/>
    </location>
</feature>
<feature type="binding site" evidence="1">
    <location>
        <position position="74"/>
    </location>
    <ligand>
        <name>S-adenosyl-L-methionine</name>
        <dbReference type="ChEBI" id="CHEBI:59789"/>
    </ligand>
</feature>
<feature type="binding site" evidence="1">
    <location>
        <position position="101"/>
    </location>
    <ligand>
        <name>S-adenosyl-L-methionine</name>
        <dbReference type="ChEBI" id="CHEBI:59789"/>
    </ligand>
</feature>
<feature type="binding site" evidence="1">
    <location>
        <position position="128"/>
    </location>
    <ligand>
        <name>S-adenosyl-L-methionine</name>
        <dbReference type="ChEBI" id="CHEBI:59789"/>
    </ligand>
</feature>
<feature type="binding site" evidence="1">
    <location>
        <begin position="172"/>
        <end position="173"/>
    </location>
    <ligand>
        <name>S-adenosyl-L-methionine</name>
        <dbReference type="ChEBI" id="CHEBI:59789"/>
    </ligand>
</feature>
<feature type="binding site" evidence="1">
    <location>
        <position position="196"/>
    </location>
    <ligand>
        <name>S-adenosyl-L-methionine</name>
        <dbReference type="ChEBI" id="CHEBI:59789"/>
    </ligand>
</feature>
<gene>
    <name type="primary">PPM1</name>
    <name type="ordered locus">YALI0D12881g</name>
</gene>
<accession>Q6C997</accession>
<dbReference type="EC" id="2.1.1.233"/>
<dbReference type="EMBL" id="CR382130">
    <property type="protein sequence ID" value="CAG80953.1"/>
    <property type="molecule type" value="Genomic_DNA"/>
</dbReference>
<dbReference type="RefSeq" id="XP_502765.1">
    <property type="nucleotide sequence ID" value="XM_502765.1"/>
</dbReference>
<dbReference type="SMR" id="Q6C997"/>
<dbReference type="FunCoup" id="Q6C997">
    <property type="interactions" value="561"/>
</dbReference>
<dbReference type="STRING" id="284591.Q6C997"/>
<dbReference type="EnsemblFungi" id="CAG80953">
    <property type="protein sequence ID" value="CAG80953"/>
    <property type="gene ID" value="YALI0_D12881g"/>
</dbReference>
<dbReference type="KEGG" id="yli:2911265"/>
<dbReference type="VEuPathDB" id="FungiDB:YALI0_D12881g"/>
<dbReference type="HOGENOM" id="CLU_031312_1_0_1"/>
<dbReference type="InParanoid" id="Q6C997"/>
<dbReference type="OMA" id="IIYEPIR"/>
<dbReference type="OrthoDB" id="83611at4891"/>
<dbReference type="Proteomes" id="UP000001300">
    <property type="component" value="Chromosome D"/>
</dbReference>
<dbReference type="GO" id="GO:0018423">
    <property type="term" value="F:protein C-terminal leucine carboxyl O-methyltransferase activity"/>
    <property type="evidence" value="ECO:0000318"/>
    <property type="project" value="GO_Central"/>
</dbReference>
<dbReference type="GO" id="GO:0032259">
    <property type="term" value="P:methylation"/>
    <property type="evidence" value="ECO:0007669"/>
    <property type="project" value="UniProtKB-KW"/>
</dbReference>
<dbReference type="FunFam" id="3.40.50.150:FF:000369">
    <property type="entry name" value="Leucine carboxyl methyltransferase 1"/>
    <property type="match status" value="1"/>
</dbReference>
<dbReference type="Gene3D" id="3.40.50.150">
    <property type="entry name" value="Vaccinia Virus protein VP39"/>
    <property type="match status" value="1"/>
</dbReference>
<dbReference type="InterPro" id="IPR016651">
    <property type="entry name" value="LCMT1"/>
</dbReference>
<dbReference type="InterPro" id="IPR007213">
    <property type="entry name" value="Ppm1/Ppm2/Tcmp"/>
</dbReference>
<dbReference type="InterPro" id="IPR029063">
    <property type="entry name" value="SAM-dependent_MTases_sf"/>
</dbReference>
<dbReference type="PANTHER" id="PTHR13600">
    <property type="entry name" value="LEUCINE CARBOXYL METHYLTRANSFERASE"/>
    <property type="match status" value="1"/>
</dbReference>
<dbReference type="PANTHER" id="PTHR13600:SF21">
    <property type="entry name" value="LEUCINE CARBOXYL METHYLTRANSFERASE 1"/>
    <property type="match status" value="1"/>
</dbReference>
<dbReference type="Pfam" id="PF04072">
    <property type="entry name" value="LCM"/>
    <property type="match status" value="1"/>
</dbReference>
<dbReference type="PIRSF" id="PIRSF016305">
    <property type="entry name" value="LCM_mtfrase"/>
    <property type="match status" value="1"/>
</dbReference>
<dbReference type="SUPFAM" id="SSF53335">
    <property type="entry name" value="S-adenosyl-L-methionine-dependent methyltransferases"/>
    <property type="match status" value="1"/>
</dbReference>
<sequence length="324" mass="36463">MNLRKDKVVQSTDGDALSSKYSAVQKGYLQDEFIDLFVAGSKQAAAQQGPGSARKVVAQFQPKLPLINRGTFVRHHAIDVLVDRFLAAKKPGQRVQIISLGAGSDTRPFSLWSSKPENRDEILYHEIDFAVSVERKRDIIMQDSTLRELVGAQEYDKTTGMHTQRYHLHGIDLRSIGPGFVLPGSDPSLATLIISECCLCYLEPDQAKQVIFWITSEFTNSTIVMYEPLSGQDQFGQVMIENLASRGISIPSMTKFPSLESQIERFKAAGYTEVLATSMDVIHDEWLSPEEQQRIHGLEFLDEREELLLLLKHYCVVWASNLTK</sequence>
<reference key="1">
    <citation type="journal article" date="2004" name="Nature">
        <title>Genome evolution in yeasts.</title>
        <authorList>
            <person name="Dujon B."/>
            <person name="Sherman D."/>
            <person name="Fischer G."/>
            <person name="Durrens P."/>
            <person name="Casaregola S."/>
            <person name="Lafontaine I."/>
            <person name="de Montigny J."/>
            <person name="Marck C."/>
            <person name="Neuveglise C."/>
            <person name="Talla E."/>
            <person name="Goffard N."/>
            <person name="Frangeul L."/>
            <person name="Aigle M."/>
            <person name="Anthouard V."/>
            <person name="Babour A."/>
            <person name="Barbe V."/>
            <person name="Barnay S."/>
            <person name="Blanchin S."/>
            <person name="Beckerich J.-M."/>
            <person name="Beyne E."/>
            <person name="Bleykasten C."/>
            <person name="Boisrame A."/>
            <person name="Boyer J."/>
            <person name="Cattolico L."/>
            <person name="Confanioleri F."/>
            <person name="de Daruvar A."/>
            <person name="Despons L."/>
            <person name="Fabre E."/>
            <person name="Fairhead C."/>
            <person name="Ferry-Dumazet H."/>
            <person name="Groppi A."/>
            <person name="Hantraye F."/>
            <person name="Hennequin C."/>
            <person name="Jauniaux N."/>
            <person name="Joyet P."/>
            <person name="Kachouri R."/>
            <person name="Kerrest A."/>
            <person name="Koszul R."/>
            <person name="Lemaire M."/>
            <person name="Lesur I."/>
            <person name="Ma L."/>
            <person name="Muller H."/>
            <person name="Nicaud J.-M."/>
            <person name="Nikolski M."/>
            <person name="Oztas S."/>
            <person name="Ozier-Kalogeropoulos O."/>
            <person name="Pellenz S."/>
            <person name="Potier S."/>
            <person name="Richard G.-F."/>
            <person name="Straub M.-L."/>
            <person name="Suleau A."/>
            <person name="Swennen D."/>
            <person name="Tekaia F."/>
            <person name="Wesolowski-Louvel M."/>
            <person name="Westhof E."/>
            <person name="Wirth B."/>
            <person name="Zeniou-Meyer M."/>
            <person name="Zivanovic Y."/>
            <person name="Bolotin-Fukuhara M."/>
            <person name="Thierry A."/>
            <person name="Bouchier C."/>
            <person name="Caudron B."/>
            <person name="Scarpelli C."/>
            <person name="Gaillardin C."/>
            <person name="Weissenbach J."/>
            <person name="Wincker P."/>
            <person name="Souciet J.-L."/>
        </authorList>
    </citation>
    <scope>NUCLEOTIDE SEQUENCE [LARGE SCALE GENOMIC DNA]</scope>
    <source>
        <strain>CLIB 122 / E 150</strain>
    </source>
</reference>
<comment type="function">
    <text evidence="1">Methylates the carboxyl group of the C-terminal leucine residue of protein phosphatase 2A catalytic subunits to form alpha-leucine ester residues.</text>
</comment>
<comment type="catalytic activity">
    <reaction>
        <text>[phosphatase 2A protein]-C-terminal L-leucine + S-adenosyl-L-methionine = [phosphatase 2A protein]-C-terminal L-leucine methyl ester + S-adenosyl-L-homocysteine</text>
        <dbReference type="Rhea" id="RHEA:48544"/>
        <dbReference type="Rhea" id="RHEA-COMP:12134"/>
        <dbReference type="Rhea" id="RHEA-COMP:12135"/>
        <dbReference type="ChEBI" id="CHEBI:57856"/>
        <dbReference type="ChEBI" id="CHEBI:59789"/>
        <dbReference type="ChEBI" id="CHEBI:90516"/>
        <dbReference type="ChEBI" id="CHEBI:90517"/>
        <dbReference type="EC" id="2.1.1.233"/>
    </reaction>
</comment>
<comment type="similarity">
    <text evidence="2">Belongs to the methyltransferase superfamily. LCMT family.</text>
</comment>
<name>LCMT1_YARLI</name>
<proteinExistence type="inferred from homology"/>
<evidence type="ECO:0000250" key="1"/>
<evidence type="ECO:0000305" key="2"/>